<proteinExistence type="inferred from homology"/>
<comment type="function">
    <text evidence="1">Is involved in the catabolism of quinate. Allows the utilization of quinate as carbon source via the beta-ketoadipate pathway.</text>
</comment>
<comment type="catalytic activity">
    <reaction evidence="1">
        <text>3-dehydroquinate = 3-dehydroshikimate + H2O</text>
        <dbReference type="Rhea" id="RHEA:21096"/>
        <dbReference type="ChEBI" id="CHEBI:15377"/>
        <dbReference type="ChEBI" id="CHEBI:16630"/>
        <dbReference type="ChEBI" id="CHEBI:32364"/>
        <dbReference type="EC" id="4.2.1.10"/>
    </reaction>
</comment>
<comment type="pathway">
    <text evidence="1">Aromatic compound metabolism; 3,4-dihydroxybenzoate biosynthesis; 3,4-dihydroxybenzoate from 3-dehydroquinate: step 1/2.</text>
</comment>
<comment type="subunit">
    <text evidence="1">Homododecamer. Adopts a ring-like structure, composed of an arrangement of two hexameric rings stacked on top of one another.</text>
</comment>
<comment type="similarity">
    <text evidence="1">Belongs to the type-II 3-dehydroquinase family.</text>
</comment>
<accession>Q4WZ01</accession>
<reference key="1">
    <citation type="journal article" date="2005" name="Nature">
        <title>Genomic sequence of the pathogenic and allergenic filamentous fungus Aspergillus fumigatus.</title>
        <authorList>
            <person name="Nierman W.C."/>
            <person name="Pain A."/>
            <person name="Anderson M.J."/>
            <person name="Wortman J.R."/>
            <person name="Kim H.S."/>
            <person name="Arroyo J."/>
            <person name="Berriman M."/>
            <person name="Abe K."/>
            <person name="Archer D.B."/>
            <person name="Bermejo C."/>
            <person name="Bennett J.W."/>
            <person name="Bowyer P."/>
            <person name="Chen D."/>
            <person name="Collins M."/>
            <person name="Coulsen R."/>
            <person name="Davies R."/>
            <person name="Dyer P.S."/>
            <person name="Farman M.L."/>
            <person name="Fedorova N."/>
            <person name="Fedorova N.D."/>
            <person name="Feldblyum T.V."/>
            <person name="Fischer R."/>
            <person name="Fosker N."/>
            <person name="Fraser A."/>
            <person name="Garcia J.L."/>
            <person name="Garcia M.J."/>
            <person name="Goble A."/>
            <person name="Goldman G.H."/>
            <person name="Gomi K."/>
            <person name="Griffith-Jones S."/>
            <person name="Gwilliam R."/>
            <person name="Haas B.J."/>
            <person name="Haas H."/>
            <person name="Harris D.E."/>
            <person name="Horiuchi H."/>
            <person name="Huang J."/>
            <person name="Humphray S."/>
            <person name="Jimenez J."/>
            <person name="Keller N."/>
            <person name="Khouri H."/>
            <person name="Kitamoto K."/>
            <person name="Kobayashi T."/>
            <person name="Konzack S."/>
            <person name="Kulkarni R."/>
            <person name="Kumagai T."/>
            <person name="Lafton A."/>
            <person name="Latge J.-P."/>
            <person name="Li W."/>
            <person name="Lord A."/>
            <person name="Lu C."/>
            <person name="Majoros W.H."/>
            <person name="May G.S."/>
            <person name="Miller B.L."/>
            <person name="Mohamoud Y."/>
            <person name="Molina M."/>
            <person name="Monod M."/>
            <person name="Mouyna I."/>
            <person name="Mulligan S."/>
            <person name="Murphy L.D."/>
            <person name="O'Neil S."/>
            <person name="Paulsen I."/>
            <person name="Penalva M.A."/>
            <person name="Pertea M."/>
            <person name="Price C."/>
            <person name="Pritchard B.L."/>
            <person name="Quail M.A."/>
            <person name="Rabbinowitsch E."/>
            <person name="Rawlins N."/>
            <person name="Rajandream M.A."/>
            <person name="Reichard U."/>
            <person name="Renauld H."/>
            <person name="Robson G.D."/>
            <person name="Rodriguez de Cordoba S."/>
            <person name="Rodriguez-Pena J.M."/>
            <person name="Ronning C.M."/>
            <person name="Rutter S."/>
            <person name="Salzberg S.L."/>
            <person name="Sanchez M."/>
            <person name="Sanchez-Ferrero J.C."/>
            <person name="Saunders D."/>
            <person name="Seeger K."/>
            <person name="Squares R."/>
            <person name="Squares S."/>
            <person name="Takeuchi M."/>
            <person name="Tekaia F."/>
            <person name="Turner G."/>
            <person name="Vazquez de Aldana C.R."/>
            <person name="Weidman J."/>
            <person name="White O."/>
            <person name="Woodward J.R."/>
            <person name="Yu J.-H."/>
            <person name="Fraser C.M."/>
            <person name="Galagan J.E."/>
            <person name="Asai K."/>
            <person name="Machida M."/>
            <person name="Hall N."/>
            <person name="Barrell B.G."/>
            <person name="Denning D.W."/>
        </authorList>
    </citation>
    <scope>NUCLEOTIDE SEQUENCE [LARGE SCALE GENOMIC DNA]</scope>
    <source>
        <strain>ATCC MYA-4609 / CBS 101355 / FGSC A1100 / Af293</strain>
    </source>
</reference>
<keyword id="KW-0456">Lyase</keyword>
<keyword id="KW-0672">Quinate metabolism</keyword>
<keyword id="KW-1185">Reference proteome</keyword>
<name>3DHQ2_ASPFU</name>
<protein>
    <recommendedName>
        <fullName evidence="1">Catabolic 3-dehydroquinase 2</fullName>
        <shortName evidence="1">cDHQase 2</shortName>
        <ecNumber evidence="1">4.2.1.10</ecNumber>
    </recommendedName>
    <alternativeName>
        <fullName evidence="1">3-dehydroquinate dehydratase 2</fullName>
    </alternativeName>
</protein>
<dbReference type="EC" id="4.2.1.10" evidence="1"/>
<dbReference type="EMBL" id="AAHF01000002">
    <property type="protein sequence ID" value="EAL92102.1"/>
    <property type="molecule type" value="Genomic_DNA"/>
</dbReference>
<dbReference type="RefSeq" id="XP_754140.1">
    <property type="nucleotide sequence ID" value="XM_749047.1"/>
</dbReference>
<dbReference type="SMR" id="Q4WZ01"/>
<dbReference type="STRING" id="330879.Q4WZ01"/>
<dbReference type="EnsemblFungi" id="EAL92102">
    <property type="protein sequence ID" value="EAL92102"/>
    <property type="gene ID" value="AFUA_3G14850"/>
</dbReference>
<dbReference type="GeneID" id="3512281"/>
<dbReference type="KEGG" id="afm:AFUA_3G14850"/>
<dbReference type="VEuPathDB" id="FungiDB:Afu3g14850"/>
<dbReference type="eggNOG" id="ENOG502S1A9">
    <property type="taxonomic scope" value="Eukaryota"/>
</dbReference>
<dbReference type="HOGENOM" id="CLU_090968_1_0_1"/>
<dbReference type="InParanoid" id="Q4WZ01"/>
<dbReference type="OMA" id="VIECHIS"/>
<dbReference type="OrthoDB" id="8191625at2759"/>
<dbReference type="UniPathway" id="UPA00088">
    <property type="reaction ID" value="UER00178"/>
</dbReference>
<dbReference type="Proteomes" id="UP000002530">
    <property type="component" value="Chromosome 3"/>
</dbReference>
<dbReference type="GO" id="GO:0003855">
    <property type="term" value="F:3-dehydroquinate dehydratase activity"/>
    <property type="evidence" value="ECO:0000318"/>
    <property type="project" value="GO_Central"/>
</dbReference>
<dbReference type="GO" id="GO:0046279">
    <property type="term" value="P:3,4-dihydroxybenzoate biosynthetic process"/>
    <property type="evidence" value="ECO:0007669"/>
    <property type="project" value="UniProtKB-UniRule"/>
</dbReference>
<dbReference type="GO" id="GO:0019631">
    <property type="term" value="P:quinate catabolic process"/>
    <property type="evidence" value="ECO:0000318"/>
    <property type="project" value="GO_Central"/>
</dbReference>
<dbReference type="CDD" id="cd00466">
    <property type="entry name" value="DHQase_II"/>
    <property type="match status" value="1"/>
</dbReference>
<dbReference type="Gene3D" id="3.40.50.9100">
    <property type="entry name" value="Dehydroquinase, class II"/>
    <property type="match status" value="1"/>
</dbReference>
<dbReference type="HAMAP" id="MF_00169">
    <property type="entry name" value="AroQ"/>
    <property type="match status" value="1"/>
</dbReference>
<dbReference type="InterPro" id="IPR001874">
    <property type="entry name" value="DHquinase_II"/>
</dbReference>
<dbReference type="InterPro" id="IPR018509">
    <property type="entry name" value="DHquinase_II_CS"/>
</dbReference>
<dbReference type="InterPro" id="IPR036441">
    <property type="entry name" value="DHquinase_II_sf"/>
</dbReference>
<dbReference type="NCBIfam" id="TIGR01088">
    <property type="entry name" value="aroQ"/>
    <property type="match status" value="1"/>
</dbReference>
<dbReference type="NCBIfam" id="NF003804">
    <property type="entry name" value="PRK05395.1-1"/>
    <property type="match status" value="1"/>
</dbReference>
<dbReference type="NCBIfam" id="NF003805">
    <property type="entry name" value="PRK05395.1-2"/>
    <property type="match status" value="1"/>
</dbReference>
<dbReference type="NCBIfam" id="NF003806">
    <property type="entry name" value="PRK05395.1-3"/>
    <property type="match status" value="1"/>
</dbReference>
<dbReference type="NCBIfam" id="NF003807">
    <property type="entry name" value="PRK05395.1-4"/>
    <property type="match status" value="1"/>
</dbReference>
<dbReference type="PANTHER" id="PTHR21272">
    <property type="entry name" value="CATABOLIC 3-DEHYDROQUINASE"/>
    <property type="match status" value="1"/>
</dbReference>
<dbReference type="PANTHER" id="PTHR21272:SF3">
    <property type="entry name" value="CATABOLIC 3-DEHYDROQUINASE"/>
    <property type="match status" value="1"/>
</dbReference>
<dbReference type="Pfam" id="PF01220">
    <property type="entry name" value="DHquinase_II"/>
    <property type="match status" value="1"/>
</dbReference>
<dbReference type="PIRSF" id="PIRSF001399">
    <property type="entry name" value="DHquinase_II"/>
    <property type="match status" value="1"/>
</dbReference>
<dbReference type="SUPFAM" id="SSF52304">
    <property type="entry name" value="Type II 3-dehydroquinate dehydratase"/>
    <property type="match status" value="1"/>
</dbReference>
<dbReference type="PROSITE" id="PS01029">
    <property type="entry name" value="DEHYDROQUINASE_II"/>
    <property type="match status" value="1"/>
</dbReference>
<organism>
    <name type="scientific">Aspergillus fumigatus (strain ATCC MYA-4609 / CBS 101355 / FGSC A1100 / Af293)</name>
    <name type="common">Neosartorya fumigata</name>
    <dbReference type="NCBI Taxonomy" id="330879"/>
    <lineage>
        <taxon>Eukaryota</taxon>
        <taxon>Fungi</taxon>
        <taxon>Dikarya</taxon>
        <taxon>Ascomycota</taxon>
        <taxon>Pezizomycotina</taxon>
        <taxon>Eurotiomycetes</taxon>
        <taxon>Eurotiomycetidae</taxon>
        <taxon>Eurotiales</taxon>
        <taxon>Aspergillaceae</taxon>
        <taxon>Aspergillus</taxon>
        <taxon>Aspergillus subgen. Fumigati</taxon>
    </lineage>
</organism>
<sequence>MPSILLINGPNLNLLGTREPHLYGRTTLPQLEDNAKALAAAKGVKLESFHSNHEGRIIDRIHEARGHTDAIIINPGAFTHTSVAIRDALIGVSVPFIEVHITNVHAREEFRHHSYLSDKAAACIIGLGTYGYEAAIEYAAREIISAKEVY</sequence>
<evidence type="ECO:0000255" key="1">
    <source>
        <dbReference type="HAMAP-Rule" id="MF_03136"/>
    </source>
</evidence>
<gene>
    <name evidence="1" type="primary">qutE2</name>
    <name type="ORF">AFUA_3G14850</name>
</gene>
<feature type="chain" id="PRO_0000402355" description="Catabolic 3-dehydroquinase 2">
    <location>
        <begin position="1"/>
        <end position="150"/>
    </location>
</feature>
<feature type="active site" description="Proton acceptor" evidence="1">
    <location>
        <position position="23"/>
    </location>
</feature>
<feature type="active site" description="Proton donor" evidence="1">
    <location>
        <position position="100"/>
    </location>
</feature>
<feature type="binding site" evidence="1">
    <location>
        <position position="74"/>
    </location>
    <ligand>
        <name>substrate</name>
    </ligand>
</feature>
<feature type="binding site" evidence="1">
    <location>
        <position position="80"/>
    </location>
    <ligand>
        <name>substrate</name>
    </ligand>
</feature>
<feature type="binding site" evidence="1">
    <location>
        <position position="87"/>
    </location>
    <ligand>
        <name>substrate</name>
    </ligand>
</feature>
<feature type="binding site" evidence="1">
    <location>
        <begin position="101"/>
        <end position="102"/>
    </location>
    <ligand>
        <name>substrate</name>
    </ligand>
</feature>
<feature type="binding site" evidence="1">
    <location>
        <position position="111"/>
    </location>
    <ligand>
        <name>substrate</name>
    </ligand>
</feature>
<feature type="site" description="Transition state stabilizer" evidence="1">
    <location>
        <position position="18"/>
    </location>
</feature>